<organism>
    <name type="scientific">Strongylocentrotus purpuratus</name>
    <name type="common">Purple sea urchin</name>
    <dbReference type="NCBI Taxonomy" id="7668"/>
    <lineage>
        <taxon>Eukaryota</taxon>
        <taxon>Metazoa</taxon>
        <taxon>Echinodermata</taxon>
        <taxon>Eleutherozoa</taxon>
        <taxon>Echinozoa</taxon>
        <taxon>Echinoidea</taxon>
        <taxon>Euechinoidea</taxon>
        <taxon>Echinacea</taxon>
        <taxon>Camarodonta</taxon>
        <taxon>Echinidea</taxon>
        <taxon>Strongylocentrotidae</taxon>
        <taxon>Strongylocentrotus</taxon>
    </lineage>
</organism>
<feature type="chain" id="PRO_0000212010" description="Creatine kinase, flagellar">
    <location>
        <begin position="1"/>
        <end position="1174"/>
    </location>
</feature>
<feature type="domain" description="Phosphagen kinase N-terminal 1" evidence="1">
    <location>
        <begin position="53"/>
        <end position="139"/>
    </location>
</feature>
<feature type="repeat" description="1; approximate">
    <location>
        <begin position="61"/>
        <end position="414"/>
    </location>
</feature>
<feature type="domain" description="Phosphagen kinase C-terminal 1" evidence="2">
    <location>
        <begin position="166"/>
        <end position="408"/>
    </location>
</feature>
<feature type="domain" description="Phosphagen kinase N-terminal 2" evidence="1">
    <location>
        <begin position="426"/>
        <end position="512"/>
    </location>
</feature>
<feature type="repeat" description="2; approximate">
    <location>
        <begin position="434"/>
        <end position="787"/>
    </location>
</feature>
<feature type="domain" description="Phosphagen kinase C-terminal 2" evidence="2">
    <location>
        <begin position="539"/>
        <end position="781"/>
    </location>
</feature>
<feature type="domain" description="Phosphagen kinase N-terminal 3" evidence="1">
    <location>
        <begin position="800"/>
        <end position="886"/>
    </location>
</feature>
<feature type="repeat" description="3; approximate">
    <location>
        <begin position="808"/>
        <end position="1161"/>
    </location>
</feature>
<feature type="domain" description="Phosphagen kinase C-terminal 3" evidence="2">
    <location>
        <begin position="913"/>
        <end position="1155"/>
    </location>
</feature>
<feature type="region of interest" description="Disordered" evidence="4">
    <location>
        <begin position="1"/>
        <end position="62"/>
    </location>
</feature>
<feature type="compositionally biased region" description="Polar residues" evidence="4">
    <location>
        <begin position="1"/>
        <end position="14"/>
    </location>
</feature>
<feature type="compositionally biased region" description="Low complexity" evidence="4">
    <location>
        <begin position="18"/>
        <end position="39"/>
    </location>
</feature>
<feature type="binding site" evidence="2">
    <location>
        <begin position="169"/>
        <end position="173"/>
    </location>
    <ligand>
        <name>ATP</name>
        <dbReference type="ChEBI" id="CHEBI:30616"/>
    </ligand>
</feature>
<feature type="binding site" evidence="2">
    <location>
        <position position="232"/>
    </location>
    <ligand>
        <name>ATP</name>
        <dbReference type="ChEBI" id="CHEBI:30616"/>
    </ligand>
</feature>
<feature type="binding site" evidence="2">
    <location>
        <position position="277"/>
    </location>
    <ligand>
        <name>ATP</name>
        <dbReference type="ChEBI" id="CHEBI:30616"/>
    </ligand>
</feature>
<feature type="binding site" evidence="2">
    <location>
        <begin position="333"/>
        <end position="337"/>
    </location>
    <ligand>
        <name>ATP</name>
        <dbReference type="ChEBI" id="CHEBI:30616"/>
    </ligand>
</feature>
<feature type="binding site" evidence="2">
    <location>
        <begin position="542"/>
        <end position="546"/>
    </location>
    <ligand>
        <name>ATP</name>
        <dbReference type="ChEBI" id="CHEBI:30616"/>
    </ligand>
</feature>
<feature type="binding site" evidence="2">
    <location>
        <position position="605"/>
    </location>
    <ligand>
        <name>ATP</name>
        <dbReference type="ChEBI" id="CHEBI:30616"/>
    </ligand>
</feature>
<feature type="binding site" evidence="2">
    <location>
        <position position="706"/>
    </location>
    <ligand>
        <name>ATP</name>
        <dbReference type="ChEBI" id="CHEBI:30616"/>
    </ligand>
</feature>
<feature type="binding site" evidence="2">
    <location>
        <begin position="734"/>
        <end position="739"/>
    </location>
    <ligand>
        <name>ATP</name>
        <dbReference type="ChEBI" id="CHEBI:30616"/>
    </ligand>
</feature>
<feature type="binding site" evidence="2">
    <location>
        <position position="749"/>
    </location>
    <ligand>
        <name>ATP</name>
        <dbReference type="ChEBI" id="CHEBI:30616"/>
    </ligand>
</feature>
<accession>P18294</accession>
<evidence type="ECO:0000255" key="1">
    <source>
        <dbReference type="PROSITE-ProRule" id="PRU00842"/>
    </source>
</evidence>
<evidence type="ECO:0000255" key="2">
    <source>
        <dbReference type="PROSITE-ProRule" id="PRU00843"/>
    </source>
</evidence>
<evidence type="ECO:0000255" key="3">
    <source>
        <dbReference type="PROSITE-ProRule" id="PRU10029"/>
    </source>
</evidence>
<evidence type="ECO:0000256" key="4">
    <source>
        <dbReference type="SAM" id="MobiDB-lite"/>
    </source>
</evidence>
<reference key="1">
    <citation type="journal article" date="1990" name="Proc. Natl. Acad. Sci. U.S.A.">
        <title>The phosphocreatine shuttle of sea urchin sperm: flagellar creatine kinase resulted from a gene triplication.</title>
        <authorList>
            <person name="Wothe D.D."/>
            <person name="Charbonneau H."/>
            <person name="Shapiro B.M."/>
        </authorList>
    </citation>
    <scope>NUCLEOTIDE SEQUENCE [MRNA]</scope>
    <scope>PARTIAL PROTEIN SEQUENCE</scope>
    <source>
        <tissue>Testis</tissue>
    </source>
</reference>
<protein>
    <recommendedName>
        <fullName>Creatine kinase, flagellar</fullName>
        <ecNumber>2.7.3.2</ecNumber>
    </recommendedName>
</protein>
<proteinExistence type="evidence at protein level"/>
<name>KCRF_STRPU</name>
<dbReference type="EC" id="2.7.3.2"/>
<dbReference type="EMBL" id="M33763">
    <property type="protein sequence ID" value="AAA30049.1"/>
    <property type="molecule type" value="mRNA"/>
</dbReference>
<dbReference type="PIR" id="A43736">
    <property type="entry name" value="A43736"/>
</dbReference>
<dbReference type="RefSeq" id="NP_999687.1">
    <property type="nucleotide sequence ID" value="NM_214522.1"/>
</dbReference>
<dbReference type="SMR" id="P18294"/>
<dbReference type="STRING" id="7668.P18294"/>
<dbReference type="EnsemblMetazoa" id="NM_214522">
    <property type="protein sequence ID" value="NP_999687"/>
    <property type="gene ID" value="GeneID_373287"/>
</dbReference>
<dbReference type="GeneID" id="373287"/>
<dbReference type="KEGG" id="spu:373287"/>
<dbReference type="CTD" id="373287"/>
<dbReference type="eggNOG" id="KOG3581">
    <property type="taxonomic scope" value="Eukaryota"/>
</dbReference>
<dbReference type="HOGENOM" id="CLU_273780_0_0_1"/>
<dbReference type="InParanoid" id="P18294"/>
<dbReference type="OMA" id="FTRFCEG"/>
<dbReference type="OrthoDB" id="430219at2759"/>
<dbReference type="PhylomeDB" id="P18294"/>
<dbReference type="Proteomes" id="UP000007110">
    <property type="component" value="Unassembled WGS sequence"/>
</dbReference>
<dbReference type="GO" id="GO:0005737">
    <property type="term" value="C:cytoplasm"/>
    <property type="evidence" value="ECO:0007669"/>
    <property type="project" value="UniProtKB-KW"/>
</dbReference>
<dbReference type="GO" id="GO:0005856">
    <property type="term" value="C:cytoskeleton"/>
    <property type="evidence" value="ECO:0007669"/>
    <property type="project" value="UniProtKB-KW"/>
</dbReference>
<dbReference type="GO" id="GO:0005615">
    <property type="term" value="C:extracellular space"/>
    <property type="evidence" value="ECO:0000318"/>
    <property type="project" value="GO_Central"/>
</dbReference>
<dbReference type="GO" id="GO:0031514">
    <property type="term" value="C:motile cilium"/>
    <property type="evidence" value="ECO:0007669"/>
    <property type="project" value="UniProtKB-KW"/>
</dbReference>
<dbReference type="GO" id="GO:0005524">
    <property type="term" value="F:ATP binding"/>
    <property type="evidence" value="ECO:0007669"/>
    <property type="project" value="UniProtKB-KW"/>
</dbReference>
<dbReference type="GO" id="GO:0004111">
    <property type="term" value="F:creatine kinase activity"/>
    <property type="evidence" value="ECO:0000318"/>
    <property type="project" value="GO_Central"/>
</dbReference>
<dbReference type="GO" id="GO:0030030">
    <property type="term" value="P:cell projection organization"/>
    <property type="evidence" value="ECO:0007669"/>
    <property type="project" value="UniProtKB-KW"/>
</dbReference>
<dbReference type="GO" id="GO:0046314">
    <property type="term" value="P:phosphocreatine biosynthetic process"/>
    <property type="evidence" value="ECO:0000318"/>
    <property type="project" value="GO_Central"/>
</dbReference>
<dbReference type="CDD" id="cd00716">
    <property type="entry name" value="creatine_kinase_like"/>
    <property type="match status" value="3"/>
</dbReference>
<dbReference type="FunFam" id="3.30.590.10:FF:000002">
    <property type="entry name" value="Creatine kinase S-type, mitochondrial"/>
    <property type="match status" value="3"/>
</dbReference>
<dbReference type="FunFam" id="1.10.135.10:FF:000004">
    <property type="entry name" value="Creatine kinase, flagellar"/>
    <property type="match status" value="1"/>
</dbReference>
<dbReference type="FunFam" id="1.10.135.10:FF:000005">
    <property type="entry name" value="Glycocyamine kinase beta chain"/>
    <property type="match status" value="1"/>
</dbReference>
<dbReference type="Gene3D" id="1.10.135.10">
    <property type="entry name" value="ATP:guanido phosphotransferase, N-terminal domain"/>
    <property type="match status" value="3"/>
</dbReference>
<dbReference type="Gene3D" id="3.30.590.10">
    <property type="entry name" value="Glutamine synthetase/guanido kinase, catalytic domain"/>
    <property type="match status" value="3"/>
</dbReference>
<dbReference type="InterPro" id="IPR000749">
    <property type="entry name" value="ATP-guanido_PTrfase"/>
</dbReference>
<dbReference type="InterPro" id="IPR022415">
    <property type="entry name" value="ATP-guanido_PTrfase_AS"/>
</dbReference>
<dbReference type="InterPro" id="IPR022414">
    <property type="entry name" value="ATP-guanido_PTrfase_cat"/>
</dbReference>
<dbReference type="InterPro" id="IPR022413">
    <property type="entry name" value="ATP-guanido_PTrfase_N"/>
</dbReference>
<dbReference type="InterPro" id="IPR036802">
    <property type="entry name" value="ATP-guanido_PTrfase_N_sf"/>
</dbReference>
<dbReference type="InterPro" id="IPR014746">
    <property type="entry name" value="Gln_synth/guanido_kin_cat_dom"/>
</dbReference>
<dbReference type="PANTHER" id="PTHR11547">
    <property type="entry name" value="ARGININE OR CREATINE KINASE"/>
    <property type="match status" value="1"/>
</dbReference>
<dbReference type="PANTHER" id="PTHR11547:SF23">
    <property type="entry name" value="CREATINE KINASE B-TYPE"/>
    <property type="match status" value="1"/>
</dbReference>
<dbReference type="Pfam" id="PF00217">
    <property type="entry name" value="ATP-gua_Ptrans"/>
    <property type="match status" value="3"/>
</dbReference>
<dbReference type="Pfam" id="PF02807">
    <property type="entry name" value="ATP-gua_PtransN"/>
    <property type="match status" value="3"/>
</dbReference>
<dbReference type="SUPFAM" id="SSF55931">
    <property type="entry name" value="Glutamine synthetase/guanido kinase"/>
    <property type="match status" value="3"/>
</dbReference>
<dbReference type="SUPFAM" id="SSF48034">
    <property type="entry name" value="Guanido kinase N-terminal domain"/>
    <property type="match status" value="3"/>
</dbReference>
<dbReference type="PROSITE" id="PS00112">
    <property type="entry name" value="PHOSPHAGEN_KINASE"/>
    <property type="match status" value="3"/>
</dbReference>
<dbReference type="PROSITE" id="PS51510">
    <property type="entry name" value="PHOSPHAGEN_KINASE_C"/>
    <property type="match status" value="3"/>
</dbReference>
<dbReference type="PROSITE" id="PS51509">
    <property type="entry name" value="PHOSPHAGEN_KINASE_N"/>
    <property type="match status" value="3"/>
</dbReference>
<keyword id="KW-0067">ATP-binding</keyword>
<keyword id="KW-0966">Cell projection</keyword>
<keyword id="KW-0969">Cilium</keyword>
<keyword id="KW-0970">Cilium biogenesis/degradation</keyword>
<keyword id="KW-0963">Cytoplasm</keyword>
<keyword id="KW-0206">Cytoskeleton</keyword>
<keyword id="KW-0903">Direct protein sequencing</keyword>
<keyword id="KW-0282">Flagellum</keyword>
<keyword id="KW-0418">Kinase</keyword>
<keyword id="KW-0547">Nucleotide-binding</keyword>
<keyword id="KW-1185">Reference proteome</keyword>
<keyword id="KW-0677">Repeat</keyword>
<keyword id="KW-0808">Transferase</keyword>
<sequence>MGCAASSQQTTATGGQPAAGEKANPAPANNNPNAANKAETTGAAEELTKESEPFVEPDPNYPDLSKHNNYLAESLTPSIYNKICNLRTLSGYSVDGCMQTGVDNPGHPFIKTVGLVAGDEECYDLFADLFDPTIDKRHNGYPRNAKHTTDLNPDHLKGGDDFDPKYVLSCRVRTGRCIRGYGLPPHCTRAERRDVEKVCKDALATLDGPLKGTYYPLTGMTEEMQDKLIADHFLFDKPVSPLLMSARMARDWPDGRGIWHNADKNFLVWINEEDHTRVISMETSGNMKNVFKRFCNGLNKVENALKAKGYEFSWNEHLGYVLTCPSNLGTGVRAGVHIKIPLFSKHAGFESILKHYRLQKRGTGGVDTASTDGTFDISNLDRLGTSEVQQVQSVVDGVKKLIELEKALEKGSDISGQIPRDPAIVRAEQVKEGYPDLSKHNNHLAHCLTYDIWKSLKDKKTPSGFTLDGCIQTGVMNPGHPHIMTVGMVAGDEESYDVFADIFDPVIDARHGGYPKDAVHVTNINHADLKGGDNLDPKYVLSCRVRTGRSIIGYSLPPHCTVEERAAVETITIGALDKFDGDLQGKYYPLEGMSDETQTQLIDDHFLFDKPVSPLLTAARMHRDWPQGRGIWHNENKNFLVWVNEEDHIRVISMEKDGNMRAVFKRFCEGLQKFEQMIKKDGKEFMWNKHLGYVLTCPSNLGTGLRAGVHVKLPLLSKYPRFDQILRALRLQKRGTGGVDTASTDGTFDISNLDRLGSSEVQQVQFVVDGVELLVQMEKKLEKGEDIFDILPQQCRPKPPIKPFSYDYPDFSLHNNWMSKCMTEEIYNKLCNLKTKGGVTLNDCIQTGIDNPGHPYIMTVGLVAGDEECYEVFAPLFDPVISARHGGYALDAKHPTNLNAAELKGGDDLDPEFVLSCRVRTGRCIRGLALPPCCTRAERAEVEKITTEALSTLSGPLKGKYYPLTGMTDEEQEKLIEDHFLFDKPVSPLLLCANMARDWPQGRGIWHNDEKNFLVWVNEEDHTRVISMEKSGNMKRVFERFCDGLKKVEDSIKSKGYQFMWNEHLGYVLTCPSNLGTGLRAGVHVKVPLLSQQKIFDSILDHMRLQKRGTGGVDTASTDGTFDISNSDRIGFSEVHLVQQLVDGVKLLVNLEKALMKGEDINSLLPEKLREDSS</sequence>
<comment type="function">
    <text>This axonemal protein participates in an energy shuttle that utilizes phosphocreatine to transfer the energy from ATP generated by the mitochondrion in the sperm head to dynein in the distal portions of the flagellum.</text>
</comment>
<comment type="catalytic activity">
    <reaction evidence="3">
        <text>creatine + ATP = N-phosphocreatine + ADP + H(+)</text>
        <dbReference type="Rhea" id="RHEA:17157"/>
        <dbReference type="ChEBI" id="CHEBI:15378"/>
        <dbReference type="ChEBI" id="CHEBI:30616"/>
        <dbReference type="ChEBI" id="CHEBI:57947"/>
        <dbReference type="ChEBI" id="CHEBI:58092"/>
        <dbReference type="ChEBI" id="CHEBI:456216"/>
        <dbReference type="EC" id="2.7.3.2"/>
    </reaction>
</comment>
<comment type="subunit">
    <text>Monomer.</text>
</comment>
<comment type="subcellular location">
    <subcellularLocation>
        <location>Cytoplasm</location>
        <location>Cytoskeleton</location>
        <location>Flagellum axoneme</location>
    </subcellularLocation>
    <text>Associates specifically with the axoneme and may bind directly to polymerized microtubules.</text>
</comment>
<comment type="domain">
    <text>Contains three complete but non-identical creatine kinase segments flanked by unique regions.</text>
</comment>
<comment type="similarity">
    <text evidence="1 2">Belongs to the ATP:guanido phosphotransferase family.</text>
</comment>